<proteinExistence type="inferred from homology"/>
<keyword id="KW-0007">Acetylation</keyword>
<keyword id="KW-0067">ATP-binding</keyword>
<keyword id="KW-0436">Ligase</keyword>
<keyword id="KW-0460">Magnesium</keyword>
<keyword id="KW-0479">Metal-binding</keyword>
<keyword id="KW-0547">Nucleotide-binding</keyword>
<keyword id="KW-1185">Reference proteome</keyword>
<evidence type="ECO:0000255" key="1">
    <source>
        <dbReference type="HAMAP-Rule" id="MF_01123"/>
    </source>
</evidence>
<sequence>MSESTPEVSSSYPPPAHFAEHANARAELYREAEEDRLAFWAKQANRLSWTTPFTEVLDWSEAPFAKWFVGGELNVAYNCVDRHVEAGHGDRVAIHWEGEPVGDRRTLTYSDLLAEVSKAANALTDLGLVAGDRVAIYLPLIPEAVIAMLACARLGIMHSVVFGGFTAAALQARIVDAQAKLLITADGQFRRGKPSPLKAAADEALAAIPDCSVEHVLVVRRTGIEMAWSEGRDLWWHHVVGSASPAHTPEPFDSEHPLFLLYTSGTTGKPKGIMHTSGGYLTQCCYTMRTIFDVKPDSDVFWCTADIGWVTGHTYGVYGPLCNGVTEVLYEGTPDTPDRHRHFQIIEKYGVTIYYTAPTLIRMFMKWGREIPDSHDLSSLRLLGSVGEPINPEAWRWYRDVIGGGRTPLVDTWWQTETGSAMISPLPGIAAAKPGSAMTPLPGISAKIVDDHGDPLPPHTEGAQHVTGYLVLDQPWPSMLRGIWGDPARYWHSYWSKFSDKGYYFAGDGARIDPDGAIWVLGRIDDVMNVSGHRISTAEVESALVAHSGVAEAAVVGVTDETTTQAICAFVVLRANYAPHDRTAEELRTEVARVISPIARPRDVHVVPELPKTRSGKIMRRLLRDVAENRELGDTSTLLDPTVFDAIRAAK</sequence>
<organism>
    <name type="scientific">Mycobacterium bovis (strain ATCC BAA-935 / AF2122/97)</name>
    <dbReference type="NCBI Taxonomy" id="233413"/>
    <lineage>
        <taxon>Bacteria</taxon>
        <taxon>Bacillati</taxon>
        <taxon>Actinomycetota</taxon>
        <taxon>Actinomycetes</taxon>
        <taxon>Mycobacteriales</taxon>
        <taxon>Mycobacteriaceae</taxon>
        <taxon>Mycobacterium</taxon>
        <taxon>Mycobacterium tuberculosis complex</taxon>
    </lineage>
</organism>
<comment type="function">
    <text evidence="1">Catalyzes the conversion of acetate into acetyl-CoA (AcCoA), an essential intermediate at the junction of anabolic and catabolic pathways. AcsA undergoes a two-step reaction. In the first half reaction, AcsA combines acetate with ATP to form acetyl-adenylate (AcAMP) intermediate. In the second half reaction, it can then transfer the acetyl group from AcAMP to the sulfhydryl group of CoA, forming the product AcCoA.</text>
</comment>
<comment type="catalytic activity">
    <reaction evidence="1">
        <text>acetate + ATP + CoA = acetyl-CoA + AMP + diphosphate</text>
        <dbReference type="Rhea" id="RHEA:23176"/>
        <dbReference type="ChEBI" id="CHEBI:30089"/>
        <dbReference type="ChEBI" id="CHEBI:30616"/>
        <dbReference type="ChEBI" id="CHEBI:33019"/>
        <dbReference type="ChEBI" id="CHEBI:57287"/>
        <dbReference type="ChEBI" id="CHEBI:57288"/>
        <dbReference type="ChEBI" id="CHEBI:456215"/>
        <dbReference type="EC" id="6.2.1.1"/>
    </reaction>
</comment>
<comment type="cofactor">
    <cofactor evidence="1">
        <name>Mg(2+)</name>
        <dbReference type="ChEBI" id="CHEBI:18420"/>
    </cofactor>
</comment>
<comment type="PTM">
    <text evidence="1">Acetylated. Deacetylation by the SIR2-homolog deacetylase activates the enzyme.</text>
</comment>
<comment type="similarity">
    <text evidence="1">Belongs to the ATP-dependent AMP-binding enzyme family.</text>
</comment>
<name>ACSA_MYCBO</name>
<gene>
    <name evidence="1" type="primary">acsA</name>
    <name type="synonym">acs</name>
    <name type="ordered locus">BQ2027_MB3691</name>
</gene>
<reference key="1">
    <citation type="journal article" date="2003" name="Proc. Natl. Acad. Sci. U.S.A.">
        <title>The complete genome sequence of Mycobacterium bovis.</title>
        <authorList>
            <person name="Garnier T."/>
            <person name="Eiglmeier K."/>
            <person name="Camus J.-C."/>
            <person name="Medina N."/>
            <person name="Mansoor H."/>
            <person name="Pryor M."/>
            <person name="Duthoy S."/>
            <person name="Grondin S."/>
            <person name="Lacroix C."/>
            <person name="Monsempe C."/>
            <person name="Simon S."/>
            <person name="Harris B."/>
            <person name="Atkin R."/>
            <person name="Doggett J."/>
            <person name="Mayes R."/>
            <person name="Keating L."/>
            <person name="Wheeler P.R."/>
            <person name="Parkhill J."/>
            <person name="Barrell B.G."/>
            <person name="Cole S.T."/>
            <person name="Gordon S.V."/>
            <person name="Hewinson R.G."/>
        </authorList>
    </citation>
    <scope>NUCLEOTIDE SEQUENCE [LARGE SCALE GENOMIC DNA]</scope>
    <source>
        <strain>ATCC BAA-935 / AF2122/97</strain>
    </source>
</reference>
<reference key="2">
    <citation type="journal article" date="2017" name="Genome Announc.">
        <title>Updated reference genome sequence and annotation of Mycobacterium bovis AF2122/97.</title>
        <authorList>
            <person name="Malone K.M."/>
            <person name="Farrell D."/>
            <person name="Stuber T.P."/>
            <person name="Schubert O.T."/>
            <person name="Aebersold R."/>
            <person name="Robbe-Austerman S."/>
            <person name="Gordon S.V."/>
        </authorList>
    </citation>
    <scope>NUCLEOTIDE SEQUENCE [LARGE SCALE GENOMIC DNA]</scope>
    <scope>GENOME REANNOTATION</scope>
    <source>
        <strain>ATCC BAA-935 / AF2122/97</strain>
    </source>
</reference>
<accession>P59871</accession>
<accession>A0A1R3Y4W5</accession>
<accession>X2BNU6</accession>
<feature type="chain" id="PRO_0000208368" description="Acetyl-coenzyme A synthetase">
    <location>
        <begin position="1"/>
        <end position="651"/>
    </location>
</feature>
<feature type="binding site" evidence="1">
    <location>
        <begin position="190"/>
        <end position="193"/>
    </location>
    <ligand>
        <name>CoA</name>
        <dbReference type="ChEBI" id="CHEBI:57287"/>
    </ligand>
</feature>
<feature type="binding site" evidence="1">
    <location>
        <position position="311"/>
    </location>
    <ligand>
        <name>CoA</name>
        <dbReference type="ChEBI" id="CHEBI:57287"/>
    </ligand>
</feature>
<feature type="binding site" evidence="1">
    <location>
        <begin position="387"/>
        <end position="389"/>
    </location>
    <ligand>
        <name>ATP</name>
        <dbReference type="ChEBI" id="CHEBI:30616"/>
    </ligand>
</feature>
<feature type="binding site" evidence="1">
    <location>
        <begin position="411"/>
        <end position="416"/>
    </location>
    <ligand>
        <name>ATP</name>
        <dbReference type="ChEBI" id="CHEBI:30616"/>
    </ligand>
</feature>
<feature type="binding site" evidence="1">
    <location>
        <position position="508"/>
    </location>
    <ligand>
        <name>ATP</name>
        <dbReference type="ChEBI" id="CHEBI:30616"/>
    </ligand>
</feature>
<feature type="binding site" evidence="1">
    <location>
        <position position="523"/>
    </location>
    <ligand>
        <name>ATP</name>
        <dbReference type="ChEBI" id="CHEBI:30616"/>
    </ligand>
</feature>
<feature type="binding site" evidence="1">
    <location>
        <position position="531"/>
    </location>
    <ligand>
        <name>CoA</name>
        <dbReference type="ChEBI" id="CHEBI:57287"/>
    </ligand>
</feature>
<feature type="binding site" evidence="1">
    <location>
        <position position="534"/>
    </location>
    <ligand>
        <name>ATP</name>
        <dbReference type="ChEBI" id="CHEBI:30616"/>
    </ligand>
</feature>
<feature type="binding site" evidence="1">
    <location>
        <position position="545"/>
    </location>
    <ligand>
        <name>Mg(2+)</name>
        <dbReference type="ChEBI" id="CHEBI:18420"/>
    </ligand>
</feature>
<feature type="binding site" evidence="1">
    <location>
        <position position="547"/>
    </location>
    <ligand>
        <name>Mg(2+)</name>
        <dbReference type="ChEBI" id="CHEBI:18420"/>
    </ligand>
</feature>
<feature type="binding site" evidence="1">
    <location>
        <position position="550"/>
    </location>
    <ligand>
        <name>Mg(2+)</name>
        <dbReference type="ChEBI" id="CHEBI:18420"/>
    </ligand>
</feature>
<feature type="modified residue" description="N6-acetyllysine" evidence="1">
    <location>
        <position position="617"/>
    </location>
</feature>
<dbReference type="EC" id="6.2.1.1" evidence="1"/>
<dbReference type="EMBL" id="LT708304">
    <property type="protein sequence ID" value="SIU02319.1"/>
    <property type="molecule type" value="Genomic_DNA"/>
</dbReference>
<dbReference type="RefSeq" id="NP_857330.1">
    <property type="nucleotide sequence ID" value="NC_002945.3"/>
</dbReference>
<dbReference type="RefSeq" id="WP_010950924.1">
    <property type="nucleotide sequence ID" value="NC_002945.4"/>
</dbReference>
<dbReference type="SMR" id="P59871"/>
<dbReference type="KEGG" id="mbo:BQ2027_MB3691"/>
<dbReference type="PATRIC" id="fig|233413.5.peg.4042"/>
<dbReference type="Proteomes" id="UP000001419">
    <property type="component" value="Chromosome"/>
</dbReference>
<dbReference type="GO" id="GO:0005829">
    <property type="term" value="C:cytosol"/>
    <property type="evidence" value="ECO:0007669"/>
    <property type="project" value="TreeGrafter"/>
</dbReference>
<dbReference type="GO" id="GO:0003987">
    <property type="term" value="F:acetate-CoA ligase activity"/>
    <property type="evidence" value="ECO:0007669"/>
    <property type="project" value="UniProtKB-UniRule"/>
</dbReference>
<dbReference type="GO" id="GO:0016208">
    <property type="term" value="F:AMP binding"/>
    <property type="evidence" value="ECO:0007669"/>
    <property type="project" value="InterPro"/>
</dbReference>
<dbReference type="GO" id="GO:0005524">
    <property type="term" value="F:ATP binding"/>
    <property type="evidence" value="ECO:0007669"/>
    <property type="project" value="UniProtKB-KW"/>
</dbReference>
<dbReference type="GO" id="GO:0046872">
    <property type="term" value="F:metal ion binding"/>
    <property type="evidence" value="ECO:0007669"/>
    <property type="project" value="UniProtKB-KW"/>
</dbReference>
<dbReference type="GO" id="GO:0019427">
    <property type="term" value="P:acetyl-CoA biosynthetic process from acetate"/>
    <property type="evidence" value="ECO:0007669"/>
    <property type="project" value="InterPro"/>
</dbReference>
<dbReference type="CDD" id="cd05966">
    <property type="entry name" value="ACS"/>
    <property type="match status" value="1"/>
</dbReference>
<dbReference type="FunFam" id="3.30.300.30:FF:000047">
    <property type="entry name" value="Acetyl-coenzyme A synthetase"/>
    <property type="match status" value="1"/>
</dbReference>
<dbReference type="FunFam" id="3.40.50.12780:FF:000001">
    <property type="entry name" value="Acetyl-coenzyme A synthetase"/>
    <property type="match status" value="1"/>
</dbReference>
<dbReference type="Gene3D" id="3.30.300.30">
    <property type="match status" value="1"/>
</dbReference>
<dbReference type="Gene3D" id="3.40.50.12780">
    <property type="entry name" value="N-terminal domain of ligase-like"/>
    <property type="match status" value="1"/>
</dbReference>
<dbReference type="HAMAP" id="MF_01123">
    <property type="entry name" value="Ac_CoA_synth"/>
    <property type="match status" value="1"/>
</dbReference>
<dbReference type="InterPro" id="IPR011904">
    <property type="entry name" value="Ac_CoA_lig"/>
</dbReference>
<dbReference type="InterPro" id="IPR032387">
    <property type="entry name" value="ACAS_N"/>
</dbReference>
<dbReference type="InterPro" id="IPR025110">
    <property type="entry name" value="AMP-bd_C"/>
</dbReference>
<dbReference type="InterPro" id="IPR045851">
    <property type="entry name" value="AMP-bd_C_sf"/>
</dbReference>
<dbReference type="InterPro" id="IPR020845">
    <property type="entry name" value="AMP-binding_CS"/>
</dbReference>
<dbReference type="InterPro" id="IPR000873">
    <property type="entry name" value="AMP-dep_synth/lig_dom"/>
</dbReference>
<dbReference type="InterPro" id="IPR042099">
    <property type="entry name" value="ANL_N_sf"/>
</dbReference>
<dbReference type="NCBIfam" id="TIGR02188">
    <property type="entry name" value="Ac_CoA_lig_AcsA"/>
    <property type="match status" value="1"/>
</dbReference>
<dbReference type="NCBIfam" id="NF001208">
    <property type="entry name" value="PRK00174.1"/>
    <property type="match status" value="1"/>
</dbReference>
<dbReference type="PANTHER" id="PTHR24095">
    <property type="entry name" value="ACETYL-COENZYME A SYNTHETASE"/>
    <property type="match status" value="1"/>
</dbReference>
<dbReference type="PANTHER" id="PTHR24095:SF14">
    <property type="entry name" value="ACETYL-COENZYME A SYNTHETASE 1"/>
    <property type="match status" value="1"/>
</dbReference>
<dbReference type="Pfam" id="PF16177">
    <property type="entry name" value="ACAS_N"/>
    <property type="match status" value="1"/>
</dbReference>
<dbReference type="Pfam" id="PF00501">
    <property type="entry name" value="AMP-binding"/>
    <property type="match status" value="1"/>
</dbReference>
<dbReference type="Pfam" id="PF13193">
    <property type="entry name" value="AMP-binding_C"/>
    <property type="match status" value="1"/>
</dbReference>
<dbReference type="SUPFAM" id="SSF56801">
    <property type="entry name" value="Acetyl-CoA synthetase-like"/>
    <property type="match status" value="1"/>
</dbReference>
<dbReference type="PROSITE" id="PS00455">
    <property type="entry name" value="AMP_BINDING"/>
    <property type="match status" value="1"/>
</dbReference>
<protein>
    <recommendedName>
        <fullName evidence="1">Acetyl-coenzyme A synthetase</fullName>
        <shortName evidence="1">AcCoA synthetase</shortName>
        <shortName evidence="1">Acs</shortName>
        <ecNumber evidence="1">6.2.1.1</ecNumber>
    </recommendedName>
    <alternativeName>
        <fullName evidence="1">Acetate--CoA ligase</fullName>
    </alternativeName>
    <alternativeName>
        <fullName evidence="1">Acyl-activating enzyme</fullName>
    </alternativeName>
</protein>